<evidence type="ECO:0000255" key="1">
    <source>
        <dbReference type="HAMAP-Rule" id="MF_00440"/>
    </source>
</evidence>
<evidence type="ECO:0000256" key="2">
    <source>
        <dbReference type="SAM" id="MobiDB-lite"/>
    </source>
</evidence>
<reference key="1">
    <citation type="journal article" date="2007" name="Genome Res.">
        <title>Genome characteristics of facultatively symbiotic Frankia sp. strains reflect host range and host plant biogeography.</title>
        <authorList>
            <person name="Normand P."/>
            <person name="Lapierre P."/>
            <person name="Tisa L.S."/>
            <person name="Gogarten J.P."/>
            <person name="Alloisio N."/>
            <person name="Bagnarol E."/>
            <person name="Bassi C.A."/>
            <person name="Berry A.M."/>
            <person name="Bickhart D.M."/>
            <person name="Choisne N."/>
            <person name="Couloux A."/>
            <person name="Cournoyer B."/>
            <person name="Cruveiller S."/>
            <person name="Daubin V."/>
            <person name="Demange N."/>
            <person name="Francino M.P."/>
            <person name="Goltsman E."/>
            <person name="Huang Y."/>
            <person name="Kopp O.R."/>
            <person name="Labarre L."/>
            <person name="Lapidus A."/>
            <person name="Lavire C."/>
            <person name="Marechal J."/>
            <person name="Martinez M."/>
            <person name="Mastronunzio J.E."/>
            <person name="Mullin B.C."/>
            <person name="Niemann J."/>
            <person name="Pujic P."/>
            <person name="Rawnsley T."/>
            <person name="Rouy Z."/>
            <person name="Schenowitz C."/>
            <person name="Sellstedt A."/>
            <person name="Tavares F."/>
            <person name="Tomkins J.P."/>
            <person name="Vallenet D."/>
            <person name="Valverde C."/>
            <person name="Wall L.G."/>
            <person name="Wang Y."/>
            <person name="Medigue C."/>
            <person name="Benson D.R."/>
        </authorList>
    </citation>
    <scope>NUCLEOTIDE SEQUENCE [LARGE SCALE GENOMIC DNA]</scope>
    <source>
        <strain>EAN1pec</strain>
    </source>
</reference>
<gene>
    <name evidence="1" type="primary">nrdR</name>
    <name type="ordered locus">Franean1_1234</name>
</gene>
<proteinExistence type="inferred from homology"/>
<organism>
    <name type="scientific">Parafrankia sp. (strain EAN1pec)</name>
    <dbReference type="NCBI Taxonomy" id="298653"/>
    <lineage>
        <taxon>Bacteria</taxon>
        <taxon>Bacillati</taxon>
        <taxon>Actinomycetota</taxon>
        <taxon>Actinomycetes</taxon>
        <taxon>Frankiales</taxon>
        <taxon>Frankiaceae</taxon>
        <taxon>Parafrankia</taxon>
    </lineage>
</organism>
<protein>
    <recommendedName>
        <fullName evidence="1">Transcriptional repressor NrdR</fullName>
    </recommendedName>
</protein>
<feature type="chain" id="PRO_1000124510" description="Transcriptional repressor NrdR">
    <location>
        <begin position="1"/>
        <end position="186"/>
    </location>
</feature>
<feature type="domain" description="ATP-cone" evidence="1">
    <location>
        <begin position="46"/>
        <end position="136"/>
    </location>
</feature>
<feature type="zinc finger region" evidence="1">
    <location>
        <begin position="3"/>
        <end position="34"/>
    </location>
</feature>
<feature type="region of interest" description="Disordered" evidence="2">
    <location>
        <begin position="149"/>
        <end position="169"/>
    </location>
</feature>
<accession>A8L6K6</accession>
<keyword id="KW-0067">ATP-binding</keyword>
<keyword id="KW-0238">DNA-binding</keyword>
<keyword id="KW-0479">Metal-binding</keyword>
<keyword id="KW-0547">Nucleotide-binding</keyword>
<keyword id="KW-0678">Repressor</keyword>
<keyword id="KW-0804">Transcription</keyword>
<keyword id="KW-0805">Transcription regulation</keyword>
<keyword id="KW-0862">Zinc</keyword>
<keyword id="KW-0863">Zinc-finger</keyword>
<name>NRDR_PARS2</name>
<comment type="function">
    <text evidence="1">Negatively regulates transcription of bacterial ribonucleotide reductase nrd genes and operons by binding to NrdR-boxes.</text>
</comment>
<comment type="cofactor">
    <cofactor evidence="1">
        <name>Zn(2+)</name>
        <dbReference type="ChEBI" id="CHEBI:29105"/>
    </cofactor>
    <text evidence="1">Binds 1 zinc ion.</text>
</comment>
<comment type="similarity">
    <text evidence="1">Belongs to the NrdR family.</text>
</comment>
<sequence length="186" mass="19667">MRCPFCRHPDSRVVDSREAEEGAAIRRRRSCPACGRRFTTMEEASLRVRKRSGATEPFSRAKVIVGVRKACQGRPVRSDDLALLAERVEETVRSSGSAEVAAEDVGRAILGPLRELDEVAYLRFASVYLAFESLGDFEAAIAALRAESAGGGEPPVAGKPTTMPAATGASAVIVPVTTGPRAAAGP</sequence>
<dbReference type="EMBL" id="CP000820">
    <property type="protein sequence ID" value="ABW10688.1"/>
    <property type="molecule type" value="Genomic_DNA"/>
</dbReference>
<dbReference type="RefSeq" id="WP_020458863.1">
    <property type="nucleotide sequence ID" value="NC_009921.1"/>
</dbReference>
<dbReference type="SMR" id="A8L6K6"/>
<dbReference type="STRING" id="298653.Franean1_1234"/>
<dbReference type="KEGG" id="fre:Franean1_1234"/>
<dbReference type="eggNOG" id="COG1327">
    <property type="taxonomic scope" value="Bacteria"/>
</dbReference>
<dbReference type="HOGENOM" id="CLU_108412_1_0_11"/>
<dbReference type="GO" id="GO:0005524">
    <property type="term" value="F:ATP binding"/>
    <property type="evidence" value="ECO:0007669"/>
    <property type="project" value="UniProtKB-KW"/>
</dbReference>
<dbReference type="GO" id="GO:0003677">
    <property type="term" value="F:DNA binding"/>
    <property type="evidence" value="ECO:0007669"/>
    <property type="project" value="UniProtKB-KW"/>
</dbReference>
<dbReference type="GO" id="GO:0008270">
    <property type="term" value="F:zinc ion binding"/>
    <property type="evidence" value="ECO:0007669"/>
    <property type="project" value="UniProtKB-UniRule"/>
</dbReference>
<dbReference type="GO" id="GO:0045892">
    <property type="term" value="P:negative regulation of DNA-templated transcription"/>
    <property type="evidence" value="ECO:0007669"/>
    <property type="project" value="UniProtKB-UniRule"/>
</dbReference>
<dbReference type="HAMAP" id="MF_00440">
    <property type="entry name" value="NrdR"/>
    <property type="match status" value="1"/>
</dbReference>
<dbReference type="InterPro" id="IPR005144">
    <property type="entry name" value="ATP-cone_dom"/>
</dbReference>
<dbReference type="InterPro" id="IPR055173">
    <property type="entry name" value="NrdR-like_N"/>
</dbReference>
<dbReference type="InterPro" id="IPR003796">
    <property type="entry name" value="RNR_NrdR-like"/>
</dbReference>
<dbReference type="NCBIfam" id="TIGR00244">
    <property type="entry name" value="transcriptional regulator NrdR"/>
    <property type="match status" value="1"/>
</dbReference>
<dbReference type="PANTHER" id="PTHR30455">
    <property type="entry name" value="TRANSCRIPTIONAL REPRESSOR NRDR"/>
    <property type="match status" value="1"/>
</dbReference>
<dbReference type="PANTHER" id="PTHR30455:SF2">
    <property type="entry name" value="TRANSCRIPTIONAL REPRESSOR NRDR"/>
    <property type="match status" value="1"/>
</dbReference>
<dbReference type="Pfam" id="PF03477">
    <property type="entry name" value="ATP-cone"/>
    <property type="match status" value="1"/>
</dbReference>
<dbReference type="Pfam" id="PF22811">
    <property type="entry name" value="Zn_ribbon_NrdR"/>
    <property type="match status" value="1"/>
</dbReference>
<dbReference type="PROSITE" id="PS51161">
    <property type="entry name" value="ATP_CONE"/>
    <property type="match status" value="1"/>
</dbReference>